<feature type="chain" id="PRO_1000012822" description="ATP-dependent protease ATPase subunit HslU">
    <location>
        <begin position="1"/>
        <end position="470"/>
    </location>
</feature>
<feature type="region of interest" description="Disordered" evidence="2">
    <location>
        <begin position="145"/>
        <end position="187"/>
    </location>
</feature>
<feature type="binding site" evidence="1">
    <location>
        <position position="22"/>
    </location>
    <ligand>
        <name>ATP</name>
        <dbReference type="ChEBI" id="CHEBI:30616"/>
    </ligand>
</feature>
<feature type="binding site" evidence="1">
    <location>
        <begin position="64"/>
        <end position="69"/>
    </location>
    <ligand>
        <name>ATP</name>
        <dbReference type="ChEBI" id="CHEBI:30616"/>
    </ligand>
</feature>
<feature type="binding site" evidence="1">
    <location>
        <position position="283"/>
    </location>
    <ligand>
        <name>ATP</name>
        <dbReference type="ChEBI" id="CHEBI:30616"/>
    </ligand>
</feature>
<feature type="binding site" evidence="1">
    <location>
        <position position="348"/>
    </location>
    <ligand>
        <name>ATP</name>
        <dbReference type="ChEBI" id="CHEBI:30616"/>
    </ligand>
</feature>
<feature type="binding site" evidence="1">
    <location>
        <position position="420"/>
    </location>
    <ligand>
        <name>ATP</name>
        <dbReference type="ChEBI" id="CHEBI:30616"/>
    </ligand>
</feature>
<name>HSLU_STAS1</name>
<comment type="function">
    <text evidence="1">ATPase subunit of a proteasome-like degradation complex; this subunit has chaperone activity. The binding of ATP and its subsequent hydrolysis by HslU are essential for unfolding of protein substrates subsequently hydrolyzed by HslV. HslU recognizes the N-terminal part of its protein substrates and unfolds these before they are guided to HslV for hydrolysis.</text>
</comment>
<comment type="subunit">
    <text evidence="1">A double ring-shaped homohexamer of HslV is capped on each side by a ring-shaped HslU homohexamer. The assembly of the HslU/HslV complex is dependent on binding of ATP.</text>
</comment>
<comment type="subcellular location">
    <subcellularLocation>
        <location evidence="1">Cytoplasm</location>
    </subcellularLocation>
</comment>
<comment type="similarity">
    <text evidence="1">Belongs to the ClpX chaperone family. HslU subfamily.</text>
</comment>
<gene>
    <name evidence="1" type="primary">hslU</name>
    <name type="ordered locus">SSP1514</name>
</gene>
<evidence type="ECO:0000255" key="1">
    <source>
        <dbReference type="HAMAP-Rule" id="MF_00249"/>
    </source>
</evidence>
<evidence type="ECO:0000256" key="2">
    <source>
        <dbReference type="SAM" id="MobiDB-lite"/>
    </source>
</evidence>
<protein>
    <recommendedName>
        <fullName evidence="1">ATP-dependent protease ATPase subunit HslU</fullName>
    </recommendedName>
    <alternativeName>
        <fullName evidence="1">Unfoldase HslU</fullName>
    </alternativeName>
</protein>
<accession>Q49X39</accession>
<reference key="1">
    <citation type="journal article" date="2005" name="Proc. Natl. Acad. Sci. U.S.A.">
        <title>Whole genome sequence of Staphylococcus saprophyticus reveals the pathogenesis of uncomplicated urinary tract infection.</title>
        <authorList>
            <person name="Kuroda M."/>
            <person name="Yamashita A."/>
            <person name="Hirakawa H."/>
            <person name="Kumano M."/>
            <person name="Morikawa K."/>
            <person name="Higashide M."/>
            <person name="Maruyama A."/>
            <person name="Inose Y."/>
            <person name="Matoba K."/>
            <person name="Toh H."/>
            <person name="Kuhara S."/>
            <person name="Hattori M."/>
            <person name="Ohta T."/>
        </authorList>
    </citation>
    <scope>NUCLEOTIDE SEQUENCE [LARGE SCALE GENOMIC DNA]</scope>
    <source>
        <strain>ATCC 15305 / DSM 20229 / NCIMB 8711 / NCTC 7292 / S-41</strain>
    </source>
</reference>
<dbReference type="EMBL" id="AP008934">
    <property type="protein sequence ID" value="BAE18659.1"/>
    <property type="molecule type" value="Genomic_DNA"/>
</dbReference>
<dbReference type="RefSeq" id="WP_011303264.1">
    <property type="nucleotide sequence ID" value="NC_007350.1"/>
</dbReference>
<dbReference type="SMR" id="Q49X39"/>
<dbReference type="GeneID" id="3617256"/>
<dbReference type="KEGG" id="ssp:SSP1514"/>
<dbReference type="PATRIC" id="fig|342451.11.peg.1516"/>
<dbReference type="eggNOG" id="COG1220">
    <property type="taxonomic scope" value="Bacteria"/>
</dbReference>
<dbReference type="HOGENOM" id="CLU_033123_0_0_9"/>
<dbReference type="OrthoDB" id="9804062at2"/>
<dbReference type="Proteomes" id="UP000006371">
    <property type="component" value="Chromosome"/>
</dbReference>
<dbReference type="GO" id="GO:0009376">
    <property type="term" value="C:HslUV protease complex"/>
    <property type="evidence" value="ECO:0007669"/>
    <property type="project" value="UniProtKB-UniRule"/>
</dbReference>
<dbReference type="GO" id="GO:0005524">
    <property type="term" value="F:ATP binding"/>
    <property type="evidence" value="ECO:0007669"/>
    <property type="project" value="UniProtKB-UniRule"/>
</dbReference>
<dbReference type="GO" id="GO:0016887">
    <property type="term" value="F:ATP hydrolysis activity"/>
    <property type="evidence" value="ECO:0007669"/>
    <property type="project" value="InterPro"/>
</dbReference>
<dbReference type="GO" id="GO:0008233">
    <property type="term" value="F:peptidase activity"/>
    <property type="evidence" value="ECO:0007669"/>
    <property type="project" value="InterPro"/>
</dbReference>
<dbReference type="GO" id="GO:0036402">
    <property type="term" value="F:proteasome-activating activity"/>
    <property type="evidence" value="ECO:0007669"/>
    <property type="project" value="UniProtKB-UniRule"/>
</dbReference>
<dbReference type="GO" id="GO:0043335">
    <property type="term" value="P:protein unfolding"/>
    <property type="evidence" value="ECO:0007669"/>
    <property type="project" value="UniProtKB-UniRule"/>
</dbReference>
<dbReference type="GO" id="GO:0051603">
    <property type="term" value="P:proteolysis involved in protein catabolic process"/>
    <property type="evidence" value="ECO:0007669"/>
    <property type="project" value="TreeGrafter"/>
</dbReference>
<dbReference type="CDD" id="cd19498">
    <property type="entry name" value="RecA-like_HslU"/>
    <property type="match status" value="1"/>
</dbReference>
<dbReference type="FunFam" id="3.40.50.300:FF:000220">
    <property type="entry name" value="ATP-dependent protease ATPase subunit HslU"/>
    <property type="match status" value="1"/>
</dbReference>
<dbReference type="Gene3D" id="1.10.8.60">
    <property type="match status" value="1"/>
</dbReference>
<dbReference type="Gene3D" id="3.40.50.300">
    <property type="entry name" value="P-loop containing nucleotide triphosphate hydrolases"/>
    <property type="match status" value="2"/>
</dbReference>
<dbReference type="HAMAP" id="MF_00249">
    <property type="entry name" value="HslU"/>
    <property type="match status" value="1"/>
</dbReference>
<dbReference type="InterPro" id="IPR003593">
    <property type="entry name" value="AAA+_ATPase"/>
</dbReference>
<dbReference type="InterPro" id="IPR050052">
    <property type="entry name" value="ATP-dep_Clp_protease_ClpX"/>
</dbReference>
<dbReference type="InterPro" id="IPR003959">
    <property type="entry name" value="ATPase_AAA_core"/>
</dbReference>
<dbReference type="InterPro" id="IPR019489">
    <property type="entry name" value="Clp_ATPase_C"/>
</dbReference>
<dbReference type="InterPro" id="IPR004491">
    <property type="entry name" value="HslU"/>
</dbReference>
<dbReference type="InterPro" id="IPR027417">
    <property type="entry name" value="P-loop_NTPase"/>
</dbReference>
<dbReference type="NCBIfam" id="TIGR00390">
    <property type="entry name" value="hslU"/>
    <property type="match status" value="1"/>
</dbReference>
<dbReference type="NCBIfam" id="NF003544">
    <property type="entry name" value="PRK05201.1"/>
    <property type="match status" value="1"/>
</dbReference>
<dbReference type="PANTHER" id="PTHR48102">
    <property type="entry name" value="ATP-DEPENDENT CLP PROTEASE ATP-BINDING SUBUNIT CLPX-LIKE, MITOCHONDRIAL-RELATED"/>
    <property type="match status" value="1"/>
</dbReference>
<dbReference type="PANTHER" id="PTHR48102:SF3">
    <property type="entry name" value="ATP-DEPENDENT PROTEASE ATPASE SUBUNIT HSLU"/>
    <property type="match status" value="1"/>
</dbReference>
<dbReference type="Pfam" id="PF00004">
    <property type="entry name" value="AAA"/>
    <property type="match status" value="1"/>
</dbReference>
<dbReference type="Pfam" id="PF07724">
    <property type="entry name" value="AAA_2"/>
    <property type="match status" value="1"/>
</dbReference>
<dbReference type="Pfam" id="PF10431">
    <property type="entry name" value="ClpB_D2-small"/>
    <property type="match status" value="1"/>
</dbReference>
<dbReference type="SMART" id="SM00382">
    <property type="entry name" value="AAA"/>
    <property type="match status" value="1"/>
</dbReference>
<dbReference type="SMART" id="SM01086">
    <property type="entry name" value="ClpB_D2-small"/>
    <property type="match status" value="1"/>
</dbReference>
<dbReference type="SUPFAM" id="SSF52540">
    <property type="entry name" value="P-loop containing nucleoside triphosphate hydrolases"/>
    <property type="match status" value="1"/>
</dbReference>
<keyword id="KW-0067">ATP-binding</keyword>
<keyword id="KW-0143">Chaperone</keyword>
<keyword id="KW-0963">Cytoplasm</keyword>
<keyword id="KW-0547">Nucleotide-binding</keyword>
<keyword id="KW-1185">Reference proteome</keyword>
<proteinExistence type="inferred from homology"/>
<sequence>METNGIKLTPRDIVSKLNEYIVGQDDAKRKVAIALRNRYRRSLLTEEEKQEVAPKNILMIGPTGVGKTEIARRMARLVGAPFIKVEATKFTEVGYVGRDVESMVRDLVDVAVRLVKDQKKALVQDEAQDKANEKLVKLLVPSMKKKANNNTNSNNPLESLFGGSIPNFGQNNDDEEETPTDEVKTKRSEIKQQLLNGQLEDEKVRLKVEQDPAAMGMLGTNQNQQMQDMMNQLMPKKKVEREVPVKTARKILTDEFADELIDQETANQEAIELAEQMGIIFIDEIDKVATNNQNSGQDVSRQGVQRDILPILEGSMVQTKYGTVNTEHMLFIGAGAFHVSKPSDLIPELQGRFPIRVELESLSVEDFVRILTEPKLSLIKQYEALLQTEQVTVKFTDEAIKRLAEIAFQVNQDTDNIGARRLHTILEKMLEDLSFEAPSMPNAVVDITPQYVDDKLKSISTNKDLSAFIL</sequence>
<organism>
    <name type="scientific">Staphylococcus saprophyticus subsp. saprophyticus (strain ATCC 15305 / DSM 20229 / NCIMB 8711 / NCTC 7292 / S-41)</name>
    <dbReference type="NCBI Taxonomy" id="342451"/>
    <lineage>
        <taxon>Bacteria</taxon>
        <taxon>Bacillati</taxon>
        <taxon>Bacillota</taxon>
        <taxon>Bacilli</taxon>
        <taxon>Bacillales</taxon>
        <taxon>Staphylococcaceae</taxon>
        <taxon>Staphylococcus</taxon>
    </lineage>
</organism>